<sequence>MAYRGFKTSRVVKHRVRRRWFNHRRRYR</sequence>
<organism>
    <name type="scientific">Spiroplasma virus 4</name>
    <name type="common">SpV4</name>
    <dbReference type="NCBI Taxonomy" id="2928746"/>
    <lineage>
        <taxon>Viruses</taxon>
        <taxon>Monodnaviria</taxon>
        <taxon>Sangervirae</taxon>
        <taxon>Phixviricota</taxon>
        <taxon>Malgrandaviricetes</taxon>
        <taxon>Petitvirales</taxon>
        <taxon>Microviridae</taxon>
        <taxon>Gokushovirinae</taxon>
        <taxon>Spiromicrovirus</taxon>
        <taxon>Spiromicrovirus SpV4</taxon>
    </lineage>
</organism>
<name>ORF9_SPV4</name>
<feature type="chain" id="PRO_0000065806" description="Uncharacterized protein ORF9">
    <location>
        <begin position="1"/>
        <end position="28"/>
    </location>
</feature>
<proteinExistence type="predicted"/>
<accession>P11341</accession>
<dbReference type="EMBL" id="M17988">
    <property type="status" value="NOT_ANNOTATED_CDS"/>
    <property type="molecule type" value="Genomic_DNA"/>
</dbReference>
<dbReference type="PIR" id="B29825">
    <property type="entry name" value="G9BPSV"/>
</dbReference>
<dbReference type="Proteomes" id="UP000002101">
    <property type="component" value="Genome"/>
</dbReference>
<protein>
    <recommendedName>
        <fullName>Uncharacterized protein ORF9</fullName>
    </recommendedName>
</protein>
<gene>
    <name type="ORF">ORF9</name>
</gene>
<reference key="1">
    <citation type="journal article" date="1987" name="J. Bacteriol.">
        <title>Spiroplasma virus 4: nucleotide sequence of the viral DNA, regulatory signals, and proposed genome organization.</title>
        <authorList>
            <person name="Renaudin J."/>
            <person name="Pascarel M.-C."/>
            <person name="Bove J.-M."/>
        </authorList>
    </citation>
    <scope>NUCLEOTIDE SEQUENCE [GENOMIC DNA]</scope>
</reference>
<keyword id="KW-1185">Reference proteome</keyword>
<organismHost>
    <name type="scientific">Spiroplasma melliferum</name>
    <dbReference type="NCBI Taxonomy" id="2134"/>
</organismHost>